<reference key="1">
    <citation type="journal article" date="2003" name="Proc. Natl. Acad. Sci. U.S.A.">
        <title>The complete genome sequence of the Arabidopsis and tomato pathogen Pseudomonas syringae pv. tomato DC3000.</title>
        <authorList>
            <person name="Buell C.R."/>
            <person name="Joardar V."/>
            <person name="Lindeberg M."/>
            <person name="Selengut J."/>
            <person name="Paulsen I.T."/>
            <person name="Gwinn M.L."/>
            <person name="Dodson R.J."/>
            <person name="DeBoy R.T."/>
            <person name="Durkin A.S."/>
            <person name="Kolonay J.F."/>
            <person name="Madupu R."/>
            <person name="Daugherty S.C."/>
            <person name="Brinkac L.M."/>
            <person name="Beanan M.J."/>
            <person name="Haft D.H."/>
            <person name="Nelson W.C."/>
            <person name="Davidsen T.M."/>
            <person name="Zafar N."/>
            <person name="Zhou L."/>
            <person name="Liu J."/>
            <person name="Yuan Q."/>
            <person name="Khouri H.M."/>
            <person name="Fedorova N.B."/>
            <person name="Tran B."/>
            <person name="Russell D."/>
            <person name="Berry K.J."/>
            <person name="Utterback T.R."/>
            <person name="Van Aken S.E."/>
            <person name="Feldblyum T.V."/>
            <person name="D'Ascenzo M."/>
            <person name="Deng W.-L."/>
            <person name="Ramos A.R."/>
            <person name="Alfano J.R."/>
            <person name="Cartinhour S."/>
            <person name="Chatterjee A.K."/>
            <person name="Delaney T.P."/>
            <person name="Lazarowitz S.G."/>
            <person name="Martin G.B."/>
            <person name="Schneider D.J."/>
            <person name="Tang X."/>
            <person name="Bender C.L."/>
            <person name="White O."/>
            <person name="Fraser C.M."/>
            <person name="Collmer A."/>
        </authorList>
    </citation>
    <scope>NUCLEOTIDE SEQUENCE [LARGE SCALE GENOMIC DNA]</scope>
    <source>
        <strain>ATCC BAA-871 / DC3000</strain>
    </source>
</reference>
<gene>
    <name evidence="1" type="primary">moaC</name>
    <name type="ordered locus">PSPTO_1247</name>
</gene>
<proteinExistence type="inferred from homology"/>
<protein>
    <recommendedName>
        <fullName evidence="1">Cyclic pyranopterin monophosphate synthase</fullName>
        <ecNumber evidence="1">4.6.1.17</ecNumber>
    </recommendedName>
    <alternativeName>
        <fullName evidence="1">Molybdenum cofactor biosynthesis protein C</fullName>
    </alternativeName>
</protein>
<evidence type="ECO:0000255" key="1">
    <source>
        <dbReference type="HAMAP-Rule" id="MF_01224"/>
    </source>
</evidence>
<dbReference type="EC" id="4.6.1.17" evidence="1"/>
<dbReference type="EMBL" id="AE016853">
    <property type="protein sequence ID" value="AAO54772.1"/>
    <property type="molecule type" value="Genomic_DNA"/>
</dbReference>
<dbReference type="RefSeq" id="NP_791077.1">
    <property type="nucleotide sequence ID" value="NC_004578.1"/>
</dbReference>
<dbReference type="RefSeq" id="WP_005764132.1">
    <property type="nucleotide sequence ID" value="NC_004578.1"/>
</dbReference>
<dbReference type="SMR" id="Q887P4"/>
<dbReference type="STRING" id="223283.PSPTO_1247"/>
<dbReference type="GeneID" id="1182883"/>
<dbReference type="KEGG" id="pst:PSPTO_1247"/>
<dbReference type="PATRIC" id="fig|223283.9.peg.1268"/>
<dbReference type="eggNOG" id="COG0315">
    <property type="taxonomic scope" value="Bacteria"/>
</dbReference>
<dbReference type="HOGENOM" id="CLU_074693_1_1_6"/>
<dbReference type="OrthoDB" id="9794429at2"/>
<dbReference type="PhylomeDB" id="Q887P4"/>
<dbReference type="UniPathway" id="UPA00344"/>
<dbReference type="Proteomes" id="UP000002515">
    <property type="component" value="Chromosome"/>
</dbReference>
<dbReference type="GO" id="GO:0061799">
    <property type="term" value="F:cyclic pyranopterin monophosphate synthase activity"/>
    <property type="evidence" value="ECO:0007669"/>
    <property type="project" value="UniProtKB-UniRule"/>
</dbReference>
<dbReference type="GO" id="GO:0006777">
    <property type="term" value="P:Mo-molybdopterin cofactor biosynthetic process"/>
    <property type="evidence" value="ECO:0007669"/>
    <property type="project" value="UniProtKB-UniRule"/>
</dbReference>
<dbReference type="CDD" id="cd01420">
    <property type="entry name" value="MoaC_PE"/>
    <property type="match status" value="1"/>
</dbReference>
<dbReference type="FunFam" id="3.30.70.640:FF:000001">
    <property type="entry name" value="Cyclic pyranopterin monophosphate synthase"/>
    <property type="match status" value="1"/>
</dbReference>
<dbReference type="Gene3D" id="3.30.70.640">
    <property type="entry name" value="Molybdopterin cofactor biosynthesis C (MoaC) domain"/>
    <property type="match status" value="1"/>
</dbReference>
<dbReference type="HAMAP" id="MF_01224_B">
    <property type="entry name" value="MoaC_B"/>
    <property type="match status" value="1"/>
</dbReference>
<dbReference type="InterPro" id="IPR023045">
    <property type="entry name" value="MoaC"/>
</dbReference>
<dbReference type="InterPro" id="IPR047594">
    <property type="entry name" value="MoaC_bact/euk"/>
</dbReference>
<dbReference type="InterPro" id="IPR036522">
    <property type="entry name" value="MoaC_sf"/>
</dbReference>
<dbReference type="InterPro" id="IPR050105">
    <property type="entry name" value="MoCo_biosynth_MoaA/MoaC"/>
</dbReference>
<dbReference type="InterPro" id="IPR002820">
    <property type="entry name" value="Mopterin_CF_biosynth-C_dom"/>
</dbReference>
<dbReference type="NCBIfam" id="TIGR00581">
    <property type="entry name" value="moaC"/>
    <property type="match status" value="1"/>
</dbReference>
<dbReference type="NCBIfam" id="NF006870">
    <property type="entry name" value="PRK09364.1"/>
    <property type="match status" value="1"/>
</dbReference>
<dbReference type="PANTHER" id="PTHR22960:SF29">
    <property type="entry name" value="CYCLIC PYRANOPTERIN MONOPHOSPHATE SYNTHASE"/>
    <property type="match status" value="1"/>
</dbReference>
<dbReference type="PANTHER" id="PTHR22960">
    <property type="entry name" value="MOLYBDOPTERIN COFACTOR SYNTHESIS PROTEIN A"/>
    <property type="match status" value="1"/>
</dbReference>
<dbReference type="Pfam" id="PF01967">
    <property type="entry name" value="MoaC"/>
    <property type="match status" value="1"/>
</dbReference>
<dbReference type="SUPFAM" id="SSF55040">
    <property type="entry name" value="Molybdenum cofactor biosynthesis protein C, MoaC"/>
    <property type="match status" value="1"/>
</dbReference>
<sequence length="161" mass="16878">MLTHLDSQGRANMVDVTDKAVTSREAVAEALVRMLPATLQMIVSGGHPKGDVFAVARIAGIQAAKKTSDLIPLCHPLMLTSIKVHLAAEGDNAVRITASCKLSGQTGVEMEALTAASIAALTIYDMCKAVDRGMVIESVRLLEKLGGKSGHFIADDAQVAP</sequence>
<feature type="chain" id="PRO_0000097819" description="Cyclic pyranopterin monophosphate synthase">
    <location>
        <begin position="1"/>
        <end position="161"/>
    </location>
</feature>
<feature type="active site" evidence="1">
    <location>
        <position position="125"/>
    </location>
</feature>
<feature type="binding site" evidence="1">
    <location>
        <begin position="73"/>
        <end position="75"/>
    </location>
    <ligand>
        <name>substrate</name>
    </ligand>
</feature>
<feature type="binding site" evidence="1">
    <location>
        <begin position="110"/>
        <end position="111"/>
    </location>
    <ligand>
        <name>substrate</name>
    </ligand>
</feature>
<comment type="function">
    <text evidence="1">Catalyzes the conversion of (8S)-3',8-cyclo-7,8-dihydroguanosine 5'-triphosphate to cyclic pyranopterin monophosphate (cPMP).</text>
</comment>
<comment type="catalytic activity">
    <reaction evidence="1">
        <text>(8S)-3',8-cyclo-7,8-dihydroguanosine 5'-triphosphate = cyclic pyranopterin phosphate + diphosphate</text>
        <dbReference type="Rhea" id="RHEA:49580"/>
        <dbReference type="ChEBI" id="CHEBI:33019"/>
        <dbReference type="ChEBI" id="CHEBI:59648"/>
        <dbReference type="ChEBI" id="CHEBI:131766"/>
        <dbReference type="EC" id="4.6.1.17"/>
    </reaction>
</comment>
<comment type="pathway">
    <text evidence="1">Cofactor biosynthesis; molybdopterin biosynthesis.</text>
</comment>
<comment type="subunit">
    <text evidence="1">Homohexamer; trimer of dimers.</text>
</comment>
<comment type="similarity">
    <text evidence="1">Belongs to the MoaC family.</text>
</comment>
<accession>Q887P4</accession>
<keyword id="KW-0456">Lyase</keyword>
<keyword id="KW-0501">Molybdenum cofactor biosynthesis</keyword>
<keyword id="KW-1185">Reference proteome</keyword>
<organism>
    <name type="scientific">Pseudomonas syringae pv. tomato (strain ATCC BAA-871 / DC3000)</name>
    <dbReference type="NCBI Taxonomy" id="223283"/>
    <lineage>
        <taxon>Bacteria</taxon>
        <taxon>Pseudomonadati</taxon>
        <taxon>Pseudomonadota</taxon>
        <taxon>Gammaproteobacteria</taxon>
        <taxon>Pseudomonadales</taxon>
        <taxon>Pseudomonadaceae</taxon>
        <taxon>Pseudomonas</taxon>
    </lineage>
</organism>
<name>MOAC_PSESM</name>